<feature type="chain" id="PRO_0000059145" description="Inactive polypeptide N-acetylgalactosaminyltransferase-like protein 5">
    <location>
        <begin position="1"/>
        <end position="431"/>
    </location>
</feature>
<feature type="topological domain" description="Cytoplasmic" evidence="2">
    <location>
        <begin position="1"/>
        <end position="4"/>
    </location>
</feature>
<feature type="transmembrane region" description="Helical; Signal-anchor for type II membrane protein" evidence="2">
    <location>
        <begin position="5"/>
        <end position="27"/>
    </location>
</feature>
<feature type="topological domain" description="Lumenal" evidence="2">
    <location>
        <begin position="28"/>
        <end position="431"/>
    </location>
</feature>
<feature type="region of interest" description="Catalytic subdomain A">
    <location>
        <begin position="114"/>
        <end position="224"/>
    </location>
</feature>
<feature type="region of interest" description="Catalytic subdomain B">
    <location>
        <begin position="282"/>
        <end position="344"/>
    </location>
</feature>
<feature type="glycosylation site" description="N-linked (GlcNAc...) asparagine" evidence="2">
    <location>
        <position position="68"/>
    </location>
</feature>
<feature type="glycosylation site" description="N-linked (GlcNAc...) asparagine" evidence="2">
    <location>
        <position position="353"/>
    </location>
</feature>
<feature type="glycosylation site" description="N-linked (GlcNAc...) asparagine" evidence="2">
    <location>
        <position position="390"/>
    </location>
</feature>
<feature type="disulfide bond" evidence="1">
    <location>
        <begin position="105"/>
        <end position="336"/>
    </location>
</feature>
<feature type="disulfide bond" evidence="1">
    <location>
        <begin position="327"/>
        <end position="403"/>
    </location>
</feature>
<feature type="sequence conflict" description="In Ref. 1; BAB30220." evidence="4" ref="1">
    <original>K</original>
    <variation>E</variation>
    <location>
        <position position="176"/>
    </location>
</feature>
<accession>Q9D4M9</accession>
<accession>A6H655</accession>
<accession>Q810S4</accession>
<accession>Q9CW06</accession>
<name>GLTL5_MOUSE</name>
<comment type="function">
    <text evidence="3">Probable inactive glycosyltransferase required during spermatid development. May participate in protein loading into the acrosomes and accumulation of ubiquitin-proteasome systems around the head-tail coupling apparatus region.</text>
</comment>
<comment type="cofactor">
    <cofactor evidence="1">
        <name>Mn(2+)</name>
        <dbReference type="ChEBI" id="CHEBI:29035"/>
    </cofactor>
</comment>
<comment type="subcellular location">
    <subcellularLocation>
        <location evidence="4">Late endosome membrane</location>
        <topology evidence="4">Single-pass type II membrane protein</topology>
    </subcellularLocation>
    <text evidence="3">Localizes to the juxtanuclear region, possibly the late endosome. Not localized in the Golgi apparatus in round spermatids (PubMed:24398516).</text>
</comment>
<comment type="tissue specificity">
    <text evidence="3">Expressed in testis. Mainly expressed in the round and elongated spermatids during spermiogenesis, not in the outermost cells of the seminiferous tubules, which contain spermatogonia and somatic Sertoli cells. Present in the juxtanuclear space in the round spermatids, not in the acrosomal vesicles. In the elongating spermatids, localizes strongly in the acroplaxome, the region between the developing acrosome and nucleus. During differentiation, also weakly detected in the transient manchette containing microtubules. In epididymal spermatozoa, weakly detected in the midpiece, but concentrates mainly in the neck region around the head-tail coupling apparatus (at protein level).</text>
</comment>
<comment type="domain">
    <text evidence="1">There are two conserved domains in the glycosyltransferase region: the N-terminal domain (domain A, also called GT1 motif), which is probably involved in manganese coordination and substrate binding and the C-terminal domain (domain B, also called Gal/GalNAc-T motif), which is probably involved in catalytic reaction and UDP-Gal binding.</text>
</comment>
<comment type="disruption phenotype">
    <text evidence="3">Heterozygous mice show male infertility because of immotile sperm: glycolytic enzymes required for sperm motility are decreased, their protein loading into acrosomes disrupted, and aberrant localization of the ubiquitin-proteasome system is observed. Females show normal fertility.</text>
</comment>
<comment type="similarity">
    <text evidence="4">Belongs to the glycosyltransferase 2 family. GalNAc-T subfamily.</text>
</comment>
<comment type="caution">
    <text evidence="5">In contrast to other members of the family, lacks the C-terminal ricin B-type lectin domain that contributes to the glycopeptide specificity, and lacks the conserved His residue in position 341. No glycosyltransferase activity has been detected in an in vitro assay (PubMed:24398516).</text>
</comment>
<comment type="sequence caution" evidence="4">
    <conflict type="miscellaneous discrepancy">
        <sequence resource="EMBL-CDS" id="AAH49554"/>
    </conflict>
    <text>Contaminating sequence. Potential poly-A sequence.</text>
</comment>
<comment type="online information" name="Functional Glycomics Gateway - GTase">
    <link uri="http://www.functionalglycomics.org/glycomics/molecule/jsp/glycoEnzyme/viewGlycoEnzyme.jsp?gbpId=gt_mou_523"/>
    <text>Putative polypeptide N-acetylgalactosaminyltransferase-like protein 5</text>
</comment>
<protein>
    <recommendedName>
        <fullName>Inactive polypeptide N-acetylgalactosaminyltransferase-like protein 5</fullName>
    </recommendedName>
    <alternativeName>
        <fullName>Polypeptide GalNAc transferase 15</fullName>
        <shortName>GalNAc-T15</shortName>
        <shortName>pp-GaNTase 15</shortName>
    </alternativeName>
    <alternativeName>
        <fullName>Protein-UDP acetylgalactosaminyltransferase 15</fullName>
    </alternativeName>
    <alternativeName>
        <fullName>UDP-GalNAc:polypeptide N-acetylgalactosaminyltransferase 15</fullName>
    </alternativeName>
</protein>
<dbReference type="EMBL" id="AK005605">
    <property type="protein sequence ID" value="BAB24147.1"/>
    <property type="molecule type" value="mRNA"/>
</dbReference>
<dbReference type="EMBL" id="AK016415">
    <property type="protein sequence ID" value="BAB30220.1"/>
    <property type="molecule type" value="mRNA"/>
</dbReference>
<dbReference type="EMBL" id="BC049554">
    <property type="protein sequence ID" value="AAH49554.1"/>
    <property type="status" value="ALT_SEQ"/>
    <property type="molecule type" value="mRNA"/>
</dbReference>
<dbReference type="EMBL" id="BC145757">
    <property type="protein sequence ID" value="AAI45758.1"/>
    <property type="molecule type" value="mRNA"/>
</dbReference>
<dbReference type="CCDS" id="CCDS19132.1"/>
<dbReference type="RefSeq" id="NP_080725.2">
    <property type="nucleotide sequence ID" value="NM_026449.3"/>
</dbReference>
<dbReference type="SMR" id="Q9D4M9"/>
<dbReference type="FunCoup" id="Q9D4M9">
    <property type="interactions" value="85"/>
</dbReference>
<dbReference type="STRING" id="10090.ENSMUSP00000030778"/>
<dbReference type="CAZy" id="GT27">
    <property type="family name" value="Glycosyltransferase Family 27"/>
</dbReference>
<dbReference type="GlyCosmos" id="Q9D4M9">
    <property type="glycosylation" value="3 sites, No reported glycans"/>
</dbReference>
<dbReference type="GlyGen" id="Q9D4M9">
    <property type="glycosylation" value="3 sites"/>
</dbReference>
<dbReference type="PhosphoSitePlus" id="Q9D4M9"/>
<dbReference type="jPOST" id="Q9D4M9"/>
<dbReference type="PaxDb" id="10090-ENSMUSP00000030778"/>
<dbReference type="ProteomicsDB" id="263376"/>
<dbReference type="Antibodypedia" id="2318">
    <property type="antibodies" value="95 antibodies from 21 providers"/>
</dbReference>
<dbReference type="DNASU" id="67909"/>
<dbReference type="Ensembl" id="ENSMUST00000030778.9">
    <property type="protein sequence ID" value="ENSMUSP00000030778.3"/>
    <property type="gene ID" value="ENSMUSG00000028938.10"/>
</dbReference>
<dbReference type="GeneID" id="67909"/>
<dbReference type="KEGG" id="mmu:67909"/>
<dbReference type="UCSC" id="uc008wsr.1">
    <property type="organism name" value="mouse"/>
</dbReference>
<dbReference type="AGR" id="MGI:1915159"/>
<dbReference type="CTD" id="168391"/>
<dbReference type="MGI" id="MGI:1915159">
    <property type="gene designation" value="Galntl5"/>
</dbReference>
<dbReference type="VEuPathDB" id="HostDB:ENSMUSG00000028938"/>
<dbReference type="eggNOG" id="KOG3736">
    <property type="taxonomic scope" value="Eukaryota"/>
</dbReference>
<dbReference type="GeneTree" id="ENSGT00940000162156"/>
<dbReference type="InParanoid" id="Q9D4M9"/>
<dbReference type="OMA" id="FNWHLQF"/>
<dbReference type="OrthoDB" id="76890at9989"/>
<dbReference type="PhylomeDB" id="Q9D4M9"/>
<dbReference type="TreeFam" id="TF313267"/>
<dbReference type="Reactome" id="R-MMU-913709">
    <property type="pathway name" value="O-linked glycosylation of mucins"/>
</dbReference>
<dbReference type="BioGRID-ORCS" id="67909">
    <property type="hits" value="0 hits in 78 CRISPR screens"/>
</dbReference>
<dbReference type="PRO" id="PR:Q9D4M9"/>
<dbReference type="Proteomes" id="UP000000589">
    <property type="component" value="Chromosome 5"/>
</dbReference>
<dbReference type="RNAct" id="Q9D4M9">
    <property type="molecule type" value="protein"/>
</dbReference>
<dbReference type="Bgee" id="ENSMUSG00000028938">
    <property type="expression patterns" value="Expressed in seminiferous tubule of testis and 10 other cell types or tissues"/>
</dbReference>
<dbReference type="ExpressionAtlas" id="Q9D4M9">
    <property type="expression patterns" value="baseline and differential"/>
</dbReference>
<dbReference type="GO" id="GO:0031902">
    <property type="term" value="C:late endosome membrane"/>
    <property type="evidence" value="ECO:0007669"/>
    <property type="project" value="UniProtKB-SubCell"/>
</dbReference>
<dbReference type="GO" id="GO:0046872">
    <property type="term" value="F:metal ion binding"/>
    <property type="evidence" value="ECO:0007669"/>
    <property type="project" value="UniProtKB-KW"/>
</dbReference>
<dbReference type="GO" id="GO:0007286">
    <property type="term" value="P:spermatid development"/>
    <property type="evidence" value="ECO:0000315"/>
    <property type="project" value="UniProtKB"/>
</dbReference>
<dbReference type="CDD" id="cd02510">
    <property type="entry name" value="pp-GalNAc-T"/>
    <property type="match status" value="1"/>
</dbReference>
<dbReference type="FunFam" id="3.90.550.10:FF:000053">
    <property type="entry name" value="Polypeptide N-acetylgalactosaminyltransferase"/>
    <property type="match status" value="1"/>
</dbReference>
<dbReference type="Gene3D" id="3.90.550.10">
    <property type="entry name" value="Spore Coat Polysaccharide Biosynthesis Protein SpsA, Chain A"/>
    <property type="match status" value="1"/>
</dbReference>
<dbReference type="InterPro" id="IPR045885">
    <property type="entry name" value="GalNAc-T"/>
</dbReference>
<dbReference type="InterPro" id="IPR001173">
    <property type="entry name" value="Glyco_trans_2-like"/>
</dbReference>
<dbReference type="InterPro" id="IPR029044">
    <property type="entry name" value="Nucleotide-diphossugar_trans"/>
</dbReference>
<dbReference type="PANTHER" id="PTHR11675:SF17">
    <property type="entry name" value="INACTIVE POLYPEPTIDE N-ACETYLGALACTOSAMINYLTRANSFERASE-LIKE PROTEIN 5"/>
    <property type="match status" value="1"/>
</dbReference>
<dbReference type="PANTHER" id="PTHR11675">
    <property type="entry name" value="N-ACETYLGALACTOSAMINYLTRANSFERASE"/>
    <property type="match status" value="1"/>
</dbReference>
<dbReference type="Pfam" id="PF00535">
    <property type="entry name" value="Glycos_transf_2"/>
    <property type="match status" value="1"/>
</dbReference>
<dbReference type="SUPFAM" id="SSF53448">
    <property type="entry name" value="Nucleotide-diphospho-sugar transferases"/>
    <property type="match status" value="1"/>
</dbReference>
<reference key="1">
    <citation type="journal article" date="2005" name="Science">
        <title>The transcriptional landscape of the mammalian genome.</title>
        <authorList>
            <person name="Carninci P."/>
            <person name="Kasukawa T."/>
            <person name="Katayama S."/>
            <person name="Gough J."/>
            <person name="Frith M.C."/>
            <person name="Maeda N."/>
            <person name="Oyama R."/>
            <person name="Ravasi T."/>
            <person name="Lenhard B."/>
            <person name="Wells C."/>
            <person name="Kodzius R."/>
            <person name="Shimokawa K."/>
            <person name="Bajic V.B."/>
            <person name="Brenner S.E."/>
            <person name="Batalov S."/>
            <person name="Forrest A.R."/>
            <person name="Zavolan M."/>
            <person name="Davis M.J."/>
            <person name="Wilming L.G."/>
            <person name="Aidinis V."/>
            <person name="Allen J.E."/>
            <person name="Ambesi-Impiombato A."/>
            <person name="Apweiler R."/>
            <person name="Aturaliya R.N."/>
            <person name="Bailey T.L."/>
            <person name="Bansal M."/>
            <person name="Baxter L."/>
            <person name="Beisel K.W."/>
            <person name="Bersano T."/>
            <person name="Bono H."/>
            <person name="Chalk A.M."/>
            <person name="Chiu K.P."/>
            <person name="Choudhary V."/>
            <person name="Christoffels A."/>
            <person name="Clutterbuck D.R."/>
            <person name="Crowe M.L."/>
            <person name="Dalla E."/>
            <person name="Dalrymple B.P."/>
            <person name="de Bono B."/>
            <person name="Della Gatta G."/>
            <person name="di Bernardo D."/>
            <person name="Down T."/>
            <person name="Engstrom P."/>
            <person name="Fagiolini M."/>
            <person name="Faulkner G."/>
            <person name="Fletcher C.F."/>
            <person name="Fukushima T."/>
            <person name="Furuno M."/>
            <person name="Futaki S."/>
            <person name="Gariboldi M."/>
            <person name="Georgii-Hemming P."/>
            <person name="Gingeras T.R."/>
            <person name="Gojobori T."/>
            <person name="Green R.E."/>
            <person name="Gustincich S."/>
            <person name="Harbers M."/>
            <person name="Hayashi Y."/>
            <person name="Hensch T.K."/>
            <person name="Hirokawa N."/>
            <person name="Hill D."/>
            <person name="Huminiecki L."/>
            <person name="Iacono M."/>
            <person name="Ikeo K."/>
            <person name="Iwama A."/>
            <person name="Ishikawa T."/>
            <person name="Jakt M."/>
            <person name="Kanapin A."/>
            <person name="Katoh M."/>
            <person name="Kawasawa Y."/>
            <person name="Kelso J."/>
            <person name="Kitamura H."/>
            <person name="Kitano H."/>
            <person name="Kollias G."/>
            <person name="Krishnan S.P."/>
            <person name="Kruger A."/>
            <person name="Kummerfeld S.K."/>
            <person name="Kurochkin I.V."/>
            <person name="Lareau L.F."/>
            <person name="Lazarevic D."/>
            <person name="Lipovich L."/>
            <person name="Liu J."/>
            <person name="Liuni S."/>
            <person name="McWilliam S."/>
            <person name="Madan Babu M."/>
            <person name="Madera M."/>
            <person name="Marchionni L."/>
            <person name="Matsuda H."/>
            <person name="Matsuzawa S."/>
            <person name="Miki H."/>
            <person name="Mignone F."/>
            <person name="Miyake S."/>
            <person name="Morris K."/>
            <person name="Mottagui-Tabar S."/>
            <person name="Mulder N."/>
            <person name="Nakano N."/>
            <person name="Nakauchi H."/>
            <person name="Ng P."/>
            <person name="Nilsson R."/>
            <person name="Nishiguchi S."/>
            <person name="Nishikawa S."/>
            <person name="Nori F."/>
            <person name="Ohara O."/>
            <person name="Okazaki Y."/>
            <person name="Orlando V."/>
            <person name="Pang K.C."/>
            <person name="Pavan W.J."/>
            <person name="Pavesi G."/>
            <person name="Pesole G."/>
            <person name="Petrovsky N."/>
            <person name="Piazza S."/>
            <person name="Reed J."/>
            <person name="Reid J.F."/>
            <person name="Ring B.Z."/>
            <person name="Ringwald M."/>
            <person name="Rost B."/>
            <person name="Ruan Y."/>
            <person name="Salzberg S.L."/>
            <person name="Sandelin A."/>
            <person name="Schneider C."/>
            <person name="Schoenbach C."/>
            <person name="Sekiguchi K."/>
            <person name="Semple C.A."/>
            <person name="Seno S."/>
            <person name="Sessa L."/>
            <person name="Sheng Y."/>
            <person name="Shibata Y."/>
            <person name="Shimada H."/>
            <person name="Shimada K."/>
            <person name="Silva D."/>
            <person name="Sinclair B."/>
            <person name="Sperling S."/>
            <person name="Stupka E."/>
            <person name="Sugiura K."/>
            <person name="Sultana R."/>
            <person name="Takenaka Y."/>
            <person name="Taki K."/>
            <person name="Tammoja K."/>
            <person name="Tan S.L."/>
            <person name="Tang S."/>
            <person name="Taylor M.S."/>
            <person name="Tegner J."/>
            <person name="Teichmann S.A."/>
            <person name="Ueda H.R."/>
            <person name="van Nimwegen E."/>
            <person name="Verardo R."/>
            <person name="Wei C.L."/>
            <person name="Yagi K."/>
            <person name="Yamanishi H."/>
            <person name="Zabarovsky E."/>
            <person name="Zhu S."/>
            <person name="Zimmer A."/>
            <person name="Hide W."/>
            <person name="Bult C."/>
            <person name="Grimmond S.M."/>
            <person name="Teasdale R.D."/>
            <person name="Liu E.T."/>
            <person name="Brusic V."/>
            <person name="Quackenbush J."/>
            <person name="Wahlestedt C."/>
            <person name="Mattick J.S."/>
            <person name="Hume D.A."/>
            <person name="Kai C."/>
            <person name="Sasaki D."/>
            <person name="Tomaru Y."/>
            <person name="Fukuda S."/>
            <person name="Kanamori-Katayama M."/>
            <person name="Suzuki M."/>
            <person name="Aoki J."/>
            <person name="Arakawa T."/>
            <person name="Iida J."/>
            <person name="Imamura K."/>
            <person name="Itoh M."/>
            <person name="Kato T."/>
            <person name="Kawaji H."/>
            <person name="Kawagashira N."/>
            <person name="Kawashima T."/>
            <person name="Kojima M."/>
            <person name="Kondo S."/>
            <person name="Konno H."/>
            <person name="Nakano K."/>
            <person name="Ninomiya N."/>
            <person name="Nishio T."/>
            <person name="Okada M."/>
            <person name="Plessy C."/>
            <person name="Shibata K."/>
            <person name="Shiraki T."/>
            <person name="Suzuki S."/>
            <person name="Tagami M."/>
            <person name="Waki K."/>
            <person name="Watahiki A."/>
            <person name="Okamura-Oho Y."/>
            <person name="Suzuki H."/>
            <person name="Kawai J."/>
            <person name="Hayashizaki Y."/>
        </authorList>
    </citation>
    <scope>NUCLEOTIDE SEQUENCE [LARGE SCALE MRNA]</scope>
    <source>
        <strain>C57BL/6J</strain>
        <tissue>Testis</tissue>
    </source>
</reference>
<reference key="2">
    <citation type="journal article" date="2004" name="Genome Res.">
        <title>The status, quality, and expansion of the NIH full-length cDNA project: the Mammalian Gene Collection (MGC).</title>
        <authorList>
            <consortium name="The MGC Project Team"/>
        </authorList>
    </citation>
    <scope>NUCLEOTIDE SEQUENCE [LARGE SCALE MRNA]</scope>
    <source>
        <tissue>Testis</tissue>
    </source>
</reference>
<reference key="3">
    <citation type="journal article" date="2014" name="Proc. Natl. Acad. Sci. U.S.A.">
        <title>A heterozygous mutation of GALNTL5 affects male infertility with impairment of sperm motility.</title>
        <authorList>
            <person name="Takasaki N."/>
            <person name="Tachibana K."/>
            <person name="Ogasawara S."/>
            <person name="Matsuzaki H."/>
            <person name="Hagiuda J."/>
            <person name="Ishikawa H."/>
            <person name="Mochida K."/>
            <person name="Inoue K."/>
            <person name="Ogonuki N."/>
            <person name="Ogura A."/>
            <person name="Noce T."/>
            <person name="Ito C."/>
            <person name="Toshimori K."/>
            <person name="Narimatsu H."/>
        </authorList>
    </citation>
    <scope>FUNCTION</scope>
    <scope>SUBCELLULAR LOCATION</scope>
    <scope>TISSUE SPECIFICITY</scope>
    <scope>DISRUPTION PHENOTYPE</scope>
</reference>
<organism>
    <name type="scientific">Mus musculus</name>
    <name type="common">Mouse</name>
    <dbReference type="NCBI Taxonomy" id="10090"/>
    <lineage>
        <taxon>Eukaryota</taxon>
        <taxon>Metazoa</taxon>
        <taxon>Chordata</taxon>
        <taxon>Craniata</taxon>
        <taxon>Vertebrata</taxon>
        <taxon>Euteleostomi</taxon>
        <taxon>Mammalia</taxon>
        <taxon>Eutheria</taxon>
        <taxon>Euarchontoglires</taxon>
        <taxon>Glires</taxon>
        <taxon>Rodentia</taxon>
        <taxon>Myomorpha</taxon>
        <taxon>Muroidea</taxon>
        <taxon>Muridae</taxon>
        <taxon>Murinae</taxon>
        <taxon>Mus</taxon>
        <taxon>Mus</taxon>
    </lineage>
</organism>
<sequence>MKSVIIQGLFCGFLAIGLWASMLLLFLHLEQEDMLENEKEELLKKRSLGKNAHQQTRHSEDVTHDEVNFSDPELIQGLRRYGLNAIMSRRLGIEREVPDSRDKICQQKHYPFNLPTASIIICFYNEEFNTLLRAVSSVVNLSPQHLLEEIILVDDMSEFDDLKDKLDYYLEIFRGKVKLIRNKKREGLIRSKMIGASRASGDILVFLDSHCEVNRVWLEPLLHAIAKDHKMVVCPIIDVINELTLDYMAAPIVRGAFDWNLNLRWDNVFAYELDGPEGPSTPIRSPAMTGGIFAINRHYFNELGQYDNGMDICGGENVELSLRIWMCGGQLFILPCSRVGYNSKALSQHRRANQSALSRNLLRVVHVWLDEYKGNFFLQRPSLTYVSCGNISERVELRKRLGCKSFQWYLDNIFPELEPFNTERKRKKNRF</sequence>
<gene>
    <name type="primary">Galntl5</name>
    <name type="synonym">Galnt15</name>
</gene>
<evidence type="ECO:0000250" key="1"/>
<evidence type="ECO:0000255" key="2"/>
<evidence type="ECO:0000269" key="3">
    <source>
    </source>
</evidence>
<evidence type="ECO:0000305" key="4"/>
<evidence type="ECO:0000305" key="5">
    <source>
    </source>
</evidence>
<keyword id="KW-0221">Differentiation</keyword>
<keyword id="KW-1015">Disulfide bond</keyword>
<keyword id="KW-0967">Endosome</keyword>
<keyword id="KW-0325">Glycoprotein</keyword>
<keyword id="KW-0464">Manganese</keyword>
<keyword id="KW-0472">Membrane</keyword>
<keyword id="KW-0479">Metal-binding</keyword>
<keyword id="KW-1185">Reference proteome</keyword>
<keyword id="KW-0735">Signal-anchor</keyword>
<keyword id="KW-0744">Spermatogenesis</keyword>
<keyword id="KW-0812">Transmembrane</keyword>
<keyword id="KW-1133">Transmembrane helix</keyword>
<proteinExistence type="evidence at protein level"/>